<gene>
    <name evidence="1" type="primary">kup</name>
    <name type="ordered locus">BOV_1339</name>
</gene>
<organism>
    <name type="scientific">Brucella ovis (strain ATCC 25840 / 63/290 / NCTC 10512)</name>
    <dbReference type="NCBI Taxonomy" id="444178"/>
    <lineage>
        <taxon>Bacteria</taxon>
        <taxon>Pseudomonadati</taxon>
        <taxon>Pseudomonadota</taxon>
        <taxon>Alphaproteobacteria</taxon>
        <taxon>Hyphomicrobiales</taxon>
        <taxon>Brucellaceae</taxon>
        <taxon>Brucella/Ochrobactrum group</taxon>
        <taxon>Brucella</taxon>
    </lineage>
</organism>
<dbReference type="EMBL" id="CP000708">
    <property type="protein sequence ID" value="ABQ61070.1"/>
    <property type="molecule type" value="Genomic_DNA"/>
</dbReference>
<dbReference type="RefSeq" id="WP_006013105.1">
    <property type="nucleotide sequence ID" value="NC_009505.1"/>
</dbReference>
<dbReference type="GeneID" id="45124732"/>
<dbReference type="KEGG" id="bov:BOV_1339"/>
<dbReference type="HOGENOM" id="CLU_008142_4_2_5"/>
<dbReference type="PhylomeDB" id="A5VRD1"/>
<dbReference type="Proteomes" id="UP000006383">
    <property type="component" value="Chromosome I"/>
</dbReference>
<dbReference type="GO" id="GO:0005886">
    <property type="term" value="C:plasma membrane"/>
    <property type="evidence" value="ECO:0007669"/>
    <property type="project" value="UniProtKB-SubCell"/>
</dbReference>
<dbReference type="GO" id="GO:0015079">
    <property type="term" value="F:potassium ion transmembrane transporter activity"/>
    <property type="evidence" value="ECO:0007669"/>
    <property type="project" value="UniProtKB-UniRule"/>
</dbReference>
<dbReference type="GO" id="GO:0015293">
    <property type="term" value="F:symporter activity"/>
    <property type="evidence" value="ECO:0007669"/>
    <property type="project" value="UniProtKB-UniRule"/>
</dbReference>
<dbReference type="HAMAP" id="MF_01522">
    <property type="entry name" value="Kup"/>
    <property type="match status" value="1"/>
</dbReference>
<dbReference type="InterPro" id="IPR003855">
    <property type="entry name" value="K+_transporter"/>
</dbReference>
<dbReference type="InterPro" id="IPR053952">
    <property type="entry name" value="K_trans_C"/>
</dbReference>
<dbReference type="InterPro" id="IPR053951">
    <property type="entry name" value="K_trans_N"/>
</dbReference>
<dbReference type="InterPro" id="IPR023051">
    <property type="entry name" value="Kup"/>
</dbReference>
<dbReference type="PANTHER" id="PTHR30540:SF79">
    <property type="entry name" value="LOW AFFINITY POTASSIUM TRANSPORT SYSTEM PROTEIN KUP"/>
    <property type="match status" value="1"/>
</dbReference>
<dbReference type="PANTHER" id="PTHR30540">
    <property type="entry name" value="OSMOTIC STRESS POTASSIUM TRANSPORTER"/>
    <property type="match status" value="1"/>
</dbReference>
<dbReference type="Pfam" id="PF02705">
    <property type="entry name" value="K_trans"/>
    <property type="match status" value="1"/>
</dbReference>
<dbReference type="Pfam" id="PF22776">
    <property type="entry name" value="K_trans_C"/>
    <property type="match status" value="1"/>
</dbReference>
<protein>
    <recommendedName>
        <fullName evidence="1">Probable potassium transport system protein Kup</fullName>
    </recommendedName>
</protein>
<comment type="function">
    <text evidence="1">Transport of potassium into the cell. Likely operates as a K(+):H(+) symporter.</text>
</comment>
<comment type="catalytic activity">
    <reaction evidence="1">
        <text>K(+)(in) + H(+)(in) = K(+)(out) + H(+)(out)</text>
        <dbReference type="Rhea" id="RHEA:28490"/>
        <dbReference type="ChEBI" id="CHEBI:15378"/>
        <dbReference type="ChEBI" id="CHEBI:29103"/>
    </reaction>
    <physiologicalReaction direction="right-to-left" evidence="1">
        <dbReference type="Rhea" id="RHEA:28492"/>
    </physiologicalReaction>
</comment>
<comment type="subcellular location">
    <subcellularLocation>
        <location evidence="1">Cell inner membrane</location>
        <topology evidence="1">Multi-pass membrane protein</topology>
    </subcellularLocation>
</comment>
<comment type="similarity">
    <text evidence="1">Belongs to the HAK/KUP transporter (TC 2.A.72) family.</text>
</comment>
<feature type="chain" id="PRO_1000068640" description="Probable potassium transport system protein Kup">
    <location>
        <begin position="1"/>
        <end position="651"/>
    </location>
</feature>
<feature type="transmembrane region" description="Helical" evidence="1">
    <location>
        <begin position="41"/>
        <end position="61"/>
    </location>
</feature>
<feature type="transmembrane region" description="Helical" evidence="1">
    <location>
        <begin position="82"/>
        <end position="102"/>
    </location>
</feature>
<feature type="transmembrane region" description="Helical" evidence="1">
    <location>
        <begin position="130"/>
        <end position="150"/>
    </location>
</feature>
<feature type="transmembrane region" description="Helical" evidence="1">
    <location>
        <begin position="163"/>
        <end position="183"/>
    </location>
</feature>
<feature type="transmembrane region" description="Helical" evidence="1">
    <location>
        <begin position="194"/>
        <end position="214"/>
    </location>
</feature>
<feature type="transmembrane region" description="Helical" evidence="1">
    <location>
        <begin position="235"/>
        <end position="255"/>
    </location>
</feature>
<feature type="transmembrane region" description="Helical" evidence="1">
    <location>
        <begin position="276"/>
        <end position="296"/>
    </location>
</feature>
<feature type="transmembrane region" description="Helical" evidence="1">
    <location>
        <begin position="309"/>
        <end position="329"/>
    </location>
</feature>
<feature type="transmembrane region" description="Helical" evidence="1">
    <location>
        <begin position="366"/>
        <end position="386"/>
    </location>
</feature>
<feature type="transmembrane region" description="Helical" evidence="1">
    <location>
        <begin position="395"/>
        <end position="415"/>
    </location>
</feature>
<feature type="transmembrane region" description="Helical" evidence="1">
    <location>
        <begin position="426"/>
        <end position="446"/>
    </location>
</feature>
<feature type="transmembrane region" description="Helical" evidence="1">
    <location>
        <begin position="450"/>
        <end position="470"/>
    </location>
</feature>
<accession>A5VRD1</accession>
<evidence type="ECO:0000255" key="1">
    <source>
        <dbReference type="HAMAP-Rule" id="MF_01522"/>
    </source>
</evidence>
<name>KUP_BRUO2</name>
<keyword id="KW-0997">Cell inner membrane</keyword>
<keyword id="KW-1003">Cell membrane</keyword>
<keyword id="KW-0406">Ion transport</keyword>
<keyword id="KW-0472">Membrane</keyword>
<keyword id="KW-0630">Potassium</keyword>
<keyword id="KW-0633">Potassium transport</keyword>
<keyword id="KW-0769">Symport</keyword>
<keyword id="KW-0812">Transmembrane</keyword>
<keyword id="KW-1133">Transmembrane helix</keyword>
<keyword id="KW-0813">Transport</keyword>
<proteinExistence type="inferred from homology"/>
<sequence>MSGELNGNDTSVQAAVSAGSVLEGAAFADEGEQHNESMKTLVLGALGVVYGDIGTSPIYAFREALHAAATNGILARSDILGVVSFIFWALTLVVTVKYVLFVLRADNNGEGGILSLMALVRGALKGRPDLILGVGICGAALFFGDAVITPAISVLSAMEGLEIVAPNLTPFVVPATVVILVTLFSVQKLGTGRVAIVFGPIMALWFVALGASGLWHIFDDPTVMAALNPYYAVRFLTVSPAVAFVTVGAVFLAMTGAEALYADLGHFGRKPIVRAWLWIVFPCLLLNYFGQAAFILSHGEAAALPFFQMIPSFALWPMVLLATAATVIASQAVITGAYSVARQAVQLNILPRLEIQHTSEKLHGQIYIPRVNLLLGLAVVILVLGFEKSSNLAAAYGIAVTGNMLVTTVLLYIVMTRIWNWRVSRALPIILGFLVIDMLFFSANIIKVHEGGWASIGIATVLVLIMWTWVRGTRHLFQKTRKAEVPLDLIVEQMAKRPPTIVPGTAVFLTGDPKSAPTALMHSLKHYKVLHENNVILTVVTASKPWVALADRARVSQYNERFMLVTLTFGYMQQPNIPRALGLCRRLGWKFDIMTTSFFLSRRSLKASVHSGMPLWQDKLFILLARTASDATEYFQIPTGRVVEIGTQVNI</sequence>
<reference key="1">
    <citation type="journal article" date="2009" name="PLoS ONE">
        <title>Genome degradation in Brucella ovis corresponds with narrowing of its host range and tissue tropism.</title>
        <authorList>
            <person name="Tsolis R.M."/>
            <person name="Seshadri R."/>
            <person name="Santos R.L."/>
            <person name="Sangari F.J."/>
            <person name="Lobo J.M."/>
            <person name="de Jong M.F."/>
            <person name="Ren Q."/>
            <person name="Myers G."/>
            <person name="Brinkac L.M."/>
            <person name="Nelson W.C."/>
            <person name="Deboy R.T."/>
            <person name="Angiuoli S."/>
            <person name="Khouri H."/>
            <person name="Dimitrov G."/>
            <person name="Robinson J.R."/>
            <person name="Mulligan S."/>
            <person name="Walker R.L."/>
            <person name="Elzer P.E."/>
            <person name="Hassan K.A."/>
            <person name="Paulsen I.T."/>
        </authorList>
    </citation>
    <scope>NUCLEOTIDE SEQUENCE [LARGE SCALE GENOMIC DNA]</scope>
    <source>
        <strain>ATCC 25840 / 63/290 / NCTC 10512</strain>
    </source>
</reference>